<protein>
    <recommendedName>
        <fullName>ATP synthase subunit a</fullName>
    </recommendedName>
    <alternativeName>
        <fullName>F-ATPase protein 6</fullName>
    </alternativeName>
</protein>
<organism>
    <name type="scientific">Emericella nidulans</name>
    <name type="common">Aspergillus nidulans</name>
    <dbReference type="NCBI Taxonomy" id="162425"/>
    <lineage>
        <taxon>Eukaryota</taxon>
        <taxon>Fungi</taxon>
        <taxon>Dikarya</taxon>
        <taxon>Ascomycota</taxon>
        <taxon>Pezizomycotina</taxon>
        <taxon>Eurotiomycetes</taxon>
        <taxon>Eurotiomycetidae</taxon>
        <taxon>Eurotiales</taxon>
        <taxon>Aspergillaceae</taxon>
        <taxon>Aspergillus</taxon>
        <taxon>Aspergillus subgen. Nidulantes</taxon>
    </lineage>
</organism>
<proteinExistence type="inferred from homology"/>
<sequence length="256" mass="28401">MYQFNFILSPLDQFEIRDLFSLNANVLGNIHLSITNIGLYLSIGLLLTLGYHLLAANNKIIPNNWSISQEAIYATVHSIVINQLNPTKGQLYFPFIYALFIFILVNNLIGMVPYSFASTSHFILTFSMSFTIVLGATFLGLQRHGLKFFSLFVPSGCPLGLLPLLVLIEFISYLSRNVSLGLRLAANILSGHMLLSILSGFTYNIMTSGILFFFLGLIPLAFIIAFSGLELAIAFIQAQVFVVLTCSYIKDGLDLH</sequence>
<comment type="function">
    <text>Mitochondrial membrane ATP synthase (F(1)F(0) ATP synthase or Complex V) produces ATP from ADP in the presence of a proton gradient across the membrane which is generated by electron transport complexes of the respiratory chain. F-type ATPases consist of two structural domains, F(1) - containing the extramembraneous catalytic core and F(0) - containing the membrane proton channel, linked together by a central stalk and a peripheral stalk. During catalysis, ATP synthesis in the catalytic domain of F(1) is coupled via a rotary mechanism of the central stalk subunits to proton translocation. Key component of the proton channel; it may play a direct role in the translocation of protons across the membrane.</text>
</comment>
<comment type="subunit">
    <text>F-type ATPases have 2 components, CF(1) - the catalytic core - and CF(0) - the membrane proton channel. CF(1) has five subunits: alpha(3), beta(3), gamma(1), delta(1), epsilon(1). CF(0) has three main subunits: a, b and c.</text>
</comment>
<comment type="subcellular location">
    <subcellularLocation>
        <location>Mitochondrion inner membrane</location>
        <topology>Multi-pass membrane protein</topology>
    </subcellularLocation>
</comment>
<comment type="similarity">
    <text evidence="3">Belongs to the ATPase A chain family.</text>
</comment>
<keyword id="KW-0066">ATP synthesis</keyword>
<keyword id="KW-0138">CF(0)</keyword>
<keyword id="KW-0375">Hydrogen ion transport</keyword>
<keyword id="KW-0406">Ion transport</keyword>
<keyword id="KW-0472">Membrane</keyword>
<keyword id="KW-0496">Mitochondrion</keyword>
<keyword id="KW-0999">Mitochondrion inner membrane</keyword>
<keyword id="KW-0812">Transmembrane</keyword>
<keyword id="KW-1133">Transmembrane helix</keyword>
<keyword id="KW-0813">Transport</keyword>
<feature type="propeptide" id="PRO_0000002612" description="Removed in mature form" evidence="1">
    <location>
        <begin position="1"/>
        <end position="8"/>
    </location>
</feature>
<feature type="chain" id="PRO_0000002613" description="ATP synthase subunit a">
    <location>
        <begin position="9"/>
        <end position="256"/>
    </location>
</feature>
<feature type="transmembrane region" description="Helical" evidence="2">
    <location>
        <begin position="34"/>
        <end position="54"/>
    </location>
</feature>
<feature type="transmembrane region" description="Helical" evidence="2">
    <location>
        <begin position="92"/>
        <end position="112"/>
    </location>
</feature>
<feature type="transmembrane region" description="Helical" evidence="2">
    <location>
        <begin position="121"/>
        <end position="141"/>
    </location>
</feature>
<feature type="transmembrane region" description="Helical" evidence="2">
    <location>
        <begin position="148"/>
        <end position="168"/>
    </location>
</feature>
<feature type="transmembrane region" description="Helical" evidence="2">
    <location>
        <begin position="186"/>
        <end position="206"/>
    </location>
</feature>
<feature type="transmembrane region" description="Helical" evidence="2">
    <location>
        <begin position="209"/>
        <end position="229"/>
    </location>
</feature>
<feature type="transmembrane region" description="Helical" evidence="2">
    <location>
        <begin position="230"/>
        <end position="250"/>
    </location>
</feature>
<reference key="1">
    <citation type="journal article" date="1982" name="Nucleic Acids Res.">
        <title>Nucleotide sequence of Aspergillus nidulans mitochondrial genes coding for ATPase subunit 6, cytochrome oxidase subunit 3, seven unidentified proteins, four tRNAs and L-rRNA.</title>
        <authorList>
            <person name="Netzker R."/>
            <person name="Koechel H.G."/>
            <person name="Basak N."/>
            <person name="Kuentzel H."/>
        </authorList>
    </citation>
    <scope>NUCLEOTIDE SEQUENCE [GENOMIC DNA]</scope>
    <source>
        <strain>pabaA1 biA1</strain>
    </source>
</reference>
<reference key="2">
    <citation type="journal article" date="1982" name="Nucleic Acids Res.">
        <title>Nucleotide sequence of a region of the mitochondrial genome of Aspergillus nidulans including the gene for ATPase subunit 6.</title>
        <authorList>
            <person name="Grisi E."/>
            <person name="Brown T.A."/>
            <person name="Waring R.B."/>
            <person name="Scazzocchio C."/>
            <person name="Davies R.W."/>
        </authorList>
    </citation>
    <scope>NUCLEOTIDE SEQUENCE [GENOMIC DNA]</scope>
    <source>
        <strain>yA2 pyroA4 cnxC3</strain>
    </source>
</reference>
<reference key="3">
    <citation type="journal article" date="1992" name="J. Mol. Evol.">
        <title>Genetic code and phylogenetic origin of oomycetous mitochondria.</title>
        <authorList>
            <person name="Karlovsky P."/>
            <person name="Fartmann B."/>
        </authorList>
    </citation>
    <scope>NUCLEOTIDE SEQUENCE [GENOMIC DNA]</scope>
</reference>
<name>ATP6_EMEND</name>
<dbReference type="EMBL" id="X01507">
    <property type="protein sequence ID" value="CAA25707.1"/>
    <property type="molecule type" value="Genomic_DNA"/>
</dbReference>
<dbReference type="EMBL" id="X04161">
    <property type="protein sequence ID" value="CAA27773.1"/>
    <property type="molecule type" value="Genomic_DNA"/>
</dbReference>
<dbReference type="EMBL" id="J01390">
    <property type="protein sequence ID" value="AAA99205.1"/>
    <property type="molecule type" value="Genomic_DNA"/>
</dbReference>
<dbReference type="PIR" id="C93436">
    <property type="entry name" value="PWAS6N"/>
</dbReference>
<dbReference type="SMR" id="P00852"/>
<dbReference type="GO" id="GO:0005743">
    <property type="term" value="C:mitochondrial inner membrane"/>
    <property type="evidence" value="ECO:0007669"/>
    <property type="project" value="UniProtKB-SubCell"/>
</dbReference>
<dbReference type="GO" id="GO:0045259">
    <property type="term" value="C:proton-transporting ATP synthase complex"/>
    <property type="evidence" value="ECO:0000266"/>
    <property type="project" value="AspGD"/>
</dbReference>
<dbReference type="GO" id="GO:0046933">
    <property type="term" value="F:proton-transporting ATP synthase activity, rotational mechanism"/>
    <property type="evidence" value="ECO:0007669"/>
    <property type="project" value="TreeGrafter"/>
</dbReference>
<dbReference type="GO" id="GO:0015986">
    <property type="term" value="P:proton motive force-driven ATP synthesis"/>
    <property type="evidence" value="ECO:0000266"/>
    <property type="project" value="AspGD"/>
</dbReference>
<dbReference type="CDD" id="cd00310">
    <property type="entry name" value="ATP-synt_Fo_a_6"/>
    <property type="match status" value="1"/>
</dbReference>
<dbReference type="FunFam" id="1.20.120.220:FF:000003">
    <property type="entry name" value="ATP synthase subunit a"/>
    <property type="match status" value="1"/>
</dbReference>
<dbReference type="Gene3D" id="1.20.120.220">
    <property type="entry name" value="ATP synthase, F0 complex, subunit A"/>
    <property type="match status" value="1"/>
</dbReference>
<dbReference type="HAMAP" id="MF_01393">
    <property type="entry name" value="ATP_synth_a_bact"/>
    <property type="match status" value="1"/>
</dbReference>
<dbReference type="InterPro" id="IPR000568">
    <property type="entry name" value="ATP_synth_F0_asu"/>
</dbReference>
<dbReference type="InterPro" id="IPR023011">
    <property type="entry name" value="ATP_synth_F0_asu_AS"/>
</dbReference>
<dbReference type="InterPro" id="IPR045083">
    <property type="entry name" value="ATP_synth_F0_asu_bact/mt"/>
</dbReference>
<dbReference type="InterPro" id="IPR035908">
    <property type="entry name" value="F0_ATP_A_sf"/>
</dbReference>
<dbReference type="NCBIfam" id="TIGR01131">
    <property type="entry name" value="ATP_synt_6_or_A"/>
    <property type="match status" value="1"/>
</dbReference>
<dbReference type="NCBIfam" id="NF004482">
    <property type="entry name" value="PRK05815.2-4"/>
    <property type="match status" value="1"/>
</dbReference>
<dbReference type="PANTHER" id="PTHR11410">
    <property type="entry name" value="ATP SYNTHASE SUBUNIT A"/>
    <property type="match status" value="1"/>
</dbReference>
<dbReference type="PANTHER" id="PTHR11410:SF0">
    <property type="entry name" value="ATP SYNTHASE SUBUNIT A"/>
    <property type="match status" value="1"/>
</dbReference>
<dbReference type="Pfam" id="PF00119">
    <property type="entry name" value="ATP-synt_A"/>
    <property type="match status" value="1"/>
</dbReference>
<dbReference type="PRINTS" id="PR00123">
    <property type="entry name" value="ATPASEA"/>
</dbReference>
<dbReference type="SUPFAM" id="SSF81336">
    <property type="entry name" value="F1F0 ATP synthase subunit A"/>
    <property type="match status" value="1"/>
</dbReference>
<dbReference type="PROSITE" id="PS00449">
    <property type="entry name" value="ATPASE_A"/>
    <property type="match status" value="1"/>
</dbReference>
<geneLocation type="mitochondrion"/>
<evidence type="ECO:0000250" key="1"/>
<evidence type="ECO:0000255" key="2"/>
<evidence type="ECO:0000305" key="3"/>
<accession>P00852</accession>
<gene>
    <name type="primary">atp6</name>
</gene>